<dbReference type="EC" id="2.1.2.11" evidence="1"/>
<dbReference type="EMBL" id="CP000384">
    <property type="protein sequence ID" value="ABG09439.1"/>
    <property type="molecule type" value="Genomic_DNA"/>
</dbReference>
<dbReference type="SMR" id="Q1B6P5"/>
<dbReference type="KEGG" id="mmc:Mmcs_3332"/>
<dbReference type="HOGENOM" id="CLU_036645_1_0_11"/>
<dbReference type="BioCyc" id="MSP164756:G1G6O-3398-MONOMER"/>
<dbReference type="UniPathway" id="UPA00028">
    <property type="reaction ID" value="UER00003"/>
</dbReference>
<dbReference type="GO" id="GO:0005737">
    <property type="term" value="C:cytoplasm"/>
    <property type="evidence" value="ECO:0007669"/>
    <property type="project" value="UniProtKB-SubCell"/>
</dbReference>
<dbReference type="GO" id="GO:0003864">
    <property type="term" value="F:3-methyl-2-oxobutanoate hydroxymethyltransferase activity"/>
    <property type="evidence" value="ECO:0007669"/>
    <property type="project" value="UniProtKB-UniRule"/>
</dbReference>
<dbReference type="GO" id="GO:0000287">
    <property type="term" value="F:magnesium ion binding"/>
    <property type="evidence" value="ECO:0007669"/>
    <property type="project" value="TreeGrafter"/>
</dbReference>
<dbReference type="GO" id="GO:0015940">
    <property type="term" value="P:pantothenate biosynthetic process"/>
    <property type="evidence" value="ECO:0007669"/>
    <property type="project" value="UniProtKB-UniRule"/>
</dbReference>
<dbReference type="CDD" id="cd06557">
    <property type="entry name" value="KPHMT-like"/>
    <property type="match status" value="1"/>
</dbReference>
<dbReference type="FunFam" id="3.20.20.60:FF:000003">
    <property type="entry name" value="3-methyl-2-oxobutanoate hydroxymethyltransferase"/>
    <property type="match status" value="1"/>
</dbReference>
<dbReference type="Gene3D" id="3.20.20.60">
    <property type="entry name" value="Phosphoenolpyruvate-binding domains"/>
    <property type="match status" value="1"/>
</dbReference>
<dbReference type="HAMAP" id="MF_00156">
    <property type="entry name" value="PanB"/>
    <property type="match status" value="1"/>
</dbReference>
<dbReference type="InterPro" id="IPR003700">
    <property type="entry name" value="Pantoate_hydroxy_MeTrfase"/>
</dbReference>
<dbReference type="InterPro" id="IPR015813">
    <property type="entry name" value="Pyrv/PenolPyrv_kinase-like_dom"/>
</dbReference>
<dbReference type="InterPro" id="IPR040442">
    <property type="entry name" value="Pyrv_kinase-like_dom_sf"/>
</dbReference>
<dbReference type="NCBIfam" id="TIGR00222">
    <property type="entry name" value="panB"/>
    <property type="match status" value="1"/>
</dbReference>
<dbReference type="NCBIfam" id="NF001452">
    <property type="entry name" value="PRK00311.1"/>
    <property type="match status" value="1"/>
</dbReference>
<dbReference type="PANTHER" id="PTHR20881">
    <property type="entry name" value="3-METHYL-2-OXOBUTANOATE HYDROXYMETHYLTRANSFERASE"/>
    <property type="match status" value="1"/>
</dbReference>
<dbReference type="PANTHER" id="PTHR20881:SF0">
    <property type="entry name" value="3-METHYL-2-OXOBUTANOATE HYDROXYMETHYLTRANSFERASE"/>
    <property type="match status" value="1"/>
</dbReference>
<dbReference type="Pfam" id="PF02548">
    <property type="entry name" value="Pantoate_transf"/>
    <property type="match status" value="1"/>
</dbReference>
<dbReference type="PIRSF" id="PIRSF000388">
    <property type="entry name" value="Pantoate_hydroxy_MeTrfase"/>
    <property type="match status" value="1"/>
</dbReference>
<dbReference type="SUPFAM" id="SSF51621">
    <property type="entry name" value="Phosphoenolpyruvate/pyruvate domain"/>
    <property type="match status" value="1"/>
</dbReference>
<accession>Q1B6P5</accession>
<evidence type="ECO:0000255" key="1">
    <source>
        <dbReference type="HAMAP-Rule" id="MF_00156"/>
    </source>
</evidence>
<gene>
    <name evidence="1" type="primary">panB</name>
    <name type="ordered locus">Mmcs_3332</name>
</gene>
<protein>
    <recommendedName>
        <fullName evidence="1">3-methyl-2-oxobutanoate hydroxymethyltransferase</fullName>
        <ecNumber evidence="1">2.1.2.11</ecNumber>
    </recommendedName>
    <alternativeName>
        <fullName evidence="1">Ketopantoate hydroxymethyltransferase</fullName>
        <shortName evidence="1">KPHMT</shortName>
    </alternativeName>
</protein>
<name>PANB_MYCSS</name>
<reference key="1">
    <citation type="submission" date="2006-06" db="EMBL/GenBank/DDBJ databases">
        <title>Complete sequence of chromosome of Mycobacterium sp. MCS.</title>
        <authorList>
            <consortium name="US DOE Joint Genome Institute"/>
            <person name="Copeland A."/>
            <person name="Lucas S."/>
            <person name="Lapidus A."/>
            <person name="Barry K."/>
            <person name="Detter J.C."/>
            <person name="Glavina del Rio T."/>
            <person name="Hammon N."/>
            <person name="Israni S."/>
            <person name="Dalin E."/>
            <person name="Tice H."/>
            <person name="Pitluck S."/>
            <person name="Martinez M."/>
            <person name="Schmutz J."/>
            <person name="Larimer F."/>
            <person name="Land M."/>
            <person name="Hauser L."/>
            <person name="Kyrpides N."/>
            <person name="Kim E."/>
            <person name="Miller C.D."/>
            <person name="Hughes J.E."/>
            <person name="Anderson A.J."/>
            <person name="Sims R.C."/>
            <person name="Richardson P."/>
        </authorList>
    </citation>
    <scope>NUCLEOTIDE SEQUENCE [LARGE SCALE GENOMIC DNA]</scope>
    <source>
        <strain>MCS</strain>
    </source>
</reference>
<comment type="function">
    <text evidence="1">Catalyzes the reversible reaction in which hydroxymethyl group from 5,10-methylenetetrahydrofolate is transferred onto alpha-ketoisovalerate to form ketopantoate.</text>
</comment>
<comment type="catalytic activity">
    <reaction evidence="1">
        <text>3-methyl-2-oxobutanoate + (6R)-5,10-methylene-5,6,7,8-tetrahydrofolate + H2O = 2-dehydropantoate + (6S)-5,6,7,8-tetrahydrofolate</text>
        <dbReference type="Rhea" id="RHEA:11824"/>
        <dbReference type="ChEBI" id="CHEBI:11561"/>
        <dbReference type="ChEBI" id="CHEBI:11851"/>
        <dbReference type="ChEBI" id="CHEBI:15377"/>
        <dbReference type="ChEBI" id="CHEBI:15636"/>
        <dbReference type="ChEBI" id="CHEBI:57453"/>
        <dbReference type="EC" id="2.1.2.11"/>
    </reaction>
</comment>
<comment type="cofactor">
    <cofactor evidence="1">
        <name>Mg(2+)</name>
        <dbReference type="ChEBI" id="CHEBI:18420"/>
    </cofactor>
    <text evidence="1">Binds 1 Mg(2+) ion per subunit.</text>
</comment>
<comment type="pathway">
    <text evidence="1">Cofactor biosynthesis; (R)-pantothenate biosynthesis; (R)-pantoate from 3-methyl-2-oxobutanoate: step 1/2.</text>
</comment>
<comment type="subunit">
    <text evidence="1">Homodecamer; pentamer of dimers.</text>
</comment>
<comment type="subcellular location">
    <subcellularLocation>
        <location evidence="1">Cytoplasm</location>
    </subcellularLocation>
</comment>
<comment type="similarity">
    <text evidence="1">Belongs to the PanB family.</text>
</comment>
<proteinExistence type="inferred from homology"/>
<organism>
    <name type="scientific">Mycobacterium sp. (strain MCS)</name>
    <dbReference type="NCBI Taxonomy" id="164756"/>
    <lineage>
        <taxon>Bacteria</taxon>
        <taxon>Bacillati</taxon>
        <taxon>Actinomycetota</taxon>
        <taxon>Actinomycetes</taxon>
        <taxon>Mycobacteriales</taxon>
        <taxon>Mycobacteriaceae</taxon>
        <taxon>Mycobacterium</taxon>
    </lineage>
</organism>
<sequence>MSEQTVYGAASDQPTPKPRVKVRTTHLQKWKAEGHKWAMLTAYDFSTARAFDDAGIPVLLVGDSAANVVYGYDTTVPITIDELIPLVRGVVRGAPHALVVADLPFGSYEEGPRQALATATRFLKETGAHAVKLEGGERVAEQIATLSAAGIPVMAHIGFTPQSVNGLGGFKVQGRGDAAEQTIHDAIAVQEAGAFSVVMEMVPAELATQITGKLTIPTVGIGAGPNCDAQVLVWQDMAGLTSGRTAKFVKRFGDVGAELRRAASQYADEVAAGVFPAEEHSF</sequence>
<keyword id="KW-0963">Cytoplasm</keyword>
<keyword id="KW-0460">Magnesium</keyword>
<keyword id="KW-0479">Metal-binding</keyword>
<keyword id="KW-0566">Pantothenate biosynthesis</keyword>
<keyword id="KW-0808">Transferase</keyword>
<feature type="chain" id="PRO_0000297302" description="3-methyl-2-oxobutanoate hydroxymethyltransferase">
    <location>
        <begin position="1"/>
        <end position="282"/>
    </location>
</feature>
<feature type="active site" description="Proton acceptor" evidence="1">
    <location>
        <position position="200"/>
    </location>
</feature>
<feature type="binding site" evidence="1">
    <location>
        <begin position="63"/>
        <end position="64"/>
    </location>
    <ligand>
        <name>3-methyl-2-oxobutanoate</name>
        <dbReference type="ChEBI" id="CHEBI:11851"/>
    </ligand>
</feature>
<feature type="binding site" evidence="1">
    <location>
        <position position="63"/>
    </location>
    <ligand>
        <name>Mg(2+)</name>
        <dbReference type="ChEBI" id="CHEBI:18420"/>
    </ligand>
</feature>
<feature type="binding site" evidence="1">
    <location>
        <position position="102"/>
    </location>
    <ligand>
        <name>3-methyl-2-oxobutanoate</name>
        <dbReference type="ChEBI" id="CHEBI:11851"/>
    </ligand>
</feature>
<feature type="binding site" evidence="1">
    <location>
        <position position="102"/>
    </location>
    <ligand>
        <name>Mg(2+)</name>
        <dbReference type="ChEBI" id="CHEBI:18420"/>
    </ligand>
</feature>
<feature type="binding site" evidence="1">
    <location>
        <position position="132"/>
    </location>
    <ligand>
        <name>3-methyl-2-oxobutanoate</name>
        <dbReference type="ChEBI" id="CHEBI:11851"/>
    </ligand>
</feature>
<feature type="binding site" evidence="1">
    <location>
        <position position="134"/>
    </location>
    <ligand>
        <name>Mg(2+)</name>
        <dbReference type="ChEBI" id="CHEBI:18420"/>
    </ligand>
</feature>